<keyword id="KW-0010">Activator</keyword>
<keyword id="KW-0238">DNA-binding</keyword>
<keyword id="KW-0539">Nucleus</keyword>
<keyword id="KW-1185">Reference proteome</keyword>
<keyword id="KW-0346">Stress response</keyword>
<keyword id="KW-0804">Transcription</keyword>
<keyword id="KW-0805">Transcription regulation</keyword>
<dbReference type="EMBL" id="AY166833">
    <property type="protein sequence ID" value="AAN85707.1"/>
    <property type="molecule type" value="mRNA"/>
</dbReference>
<dbReference type="EMBL" id="CM000134">
    <property type="protein sequence ID" value="EAZ09798.1"/>
    <property type="molecule type" value="Genomic_DNA"/>
</dbReference>
<dbReference type="SMR" id="Q8GUW4"/>
<dbReference type="STRING" id="39946.Q8GUW4"/>
<dbReference type="EnsemblPlants" id="BGIOSGA029417-TA">
    <property type="protein sequence ID" value="BGIOSGA029417-PA"/>
    <property type="gene ID" value="BGIOSGA029417"/>
</dbReference>
<dbReference type="EnsemblPlants" id="OsGoSa_09g0016910.01">
    <property type="protein sequence ID" value="OsGoSa_09g0016910.01"/>
    <property type="gene ID" value="OsGoSa_09g0016910"/>
</dbReference>
<dbReference type="EnsemblPlants" id="OsIR64_09g0017060.01">
    <property type="protein sequence ID" value="OsIR64_09g0017060.01"/>
    <property type="gene ID" value="OsIR64_09g0017060"/>
</dbReference>
<dbReference type="EnsemblPlants" id="OsKYG_09g0016870.01">
    <property type="protein sequence ID" value="OsKYG_09g0016870.01"/>
    <property type="gene ID" value="OsKYG_09g0016870"/>
</dbReference>
<dbReference type="EnsemblPlants" id="OsLaMu_09g0016940.01">
    <property type="protein sequence ID" value="OsLaMu_09g0016940.01"/>
    <property type="gene ID" value="OsLaMu_09g0016940"/>
</dbReference>
<dbReference type="EnsemblPlants" id="OsLima_09g0017080.01">
    <property type="protein sequence ID" value="OsLima_09g0017080.01"/>
    <property type="gene ID" value="OsLima_09g0017080"/>
</dbReference>
<dbReference type="EnsemblPlants" id="OsLiXu_09g0016830.01">
    <property type="protein sequence ID" value="OsLiXu_09g0016830.01"/>
    <property type="gene ID" value="OsLiXu_09g0016830"/>
</dbReference>
<dbReference type="EnsemblPlants" id="OsLiXu_Ung0053750.01">
    <property type="protein sequence ID" value="OsLiXu_Ung0053750.01"/>
    <property type="gene ID" value="OsLiXu_Ung0053750"/>
</dbReference>
<dbReference type="EnsemblPlants" id="OsPr106_09g0017210.01">
    <property type="protein sequence ID" value="OsPr106_09g0017210.01"/>
    <property type="gene ID" value="OsPr106_09g0017210"/>
</dbReference>
<dbReference type="Gramene" id="BGIOSGA029417-TA">
    <property type="protein sequence ID" value="BGIOSGA029417-PA"/>
    <property type="gene ID" value="BGIOSGA029417"/>
</dbReference>
<dbReference type="Gramene" id="OsGoSa_09g0016910.01">
    <property type="protein sequence ID" value="OsGoSa_09g0016910.01"/>
    <property type="gene ID" value="OsGoSa_09g0016910"/>
</dbReference>
<dbReference type="Gramene" id="OsIR64_09g0017060.01">
    <property type="protein sequence ID" value="OsIR64_09g0017060.01"/>
    <property type="gene ID" value="OsIR64_09g0017060"/>
</dbReference>
<dbReference type="Gramene" id="OsKYG_09g0016870.01">
    <property type="protein sequence ID" value="OsKYG_09g0016870.01"/>
    <property type="gene ID" value="OsKYG_09g0016870"/>
</dbReference>
<dbReference type="Gramene" id="OsLaMu_09g0016940.01">
    <property type="protein sequence ID" value="OsLaMu_09g0016940.01"/>
    <property type="gene ID" value="OsLaMu_09g0016940"/>
</dbReference>
<dbReference type="Gramene" id="OsLima_09g0017080.01">
    <property type="protein sequence ID" value="OsLima_09g0017080.01"/>
    <property type="gene ID" value="OsLima_09g0017080"/>
</dbReference>
<dbReference type="Gramene" id="OsLiXu_09g0016830.01">
    <property type="protein sequence ID" value="OsLiXu_09g0016830.01"/>
    <property type="gene ID" value="OsLiXu_09g0016830"/>
</dbReference>
<dbReference type="Gramene" id="OsLiXu_Ung0053750.01">
    <property type="protein sequence ID" value="OsLiXu_Ung0053750.01"/>
    <property type="gene ID" value="OsLiXu_Ung0053750"/>
</dbReference>
<dbReference type="Gramene" id="OsPr106_09g0017210.01">
    <property type="protein sequence ID" value="OsPr106_09g0017210.01"/>
    <property type="gene ID" value="OsPr106_09g0017210"/>
</dbReference>
<dbReference type="HOGENOM" id="CLU_063331_1_0_1"/>
<dbReference type="OMA" id="ERWVCEL"/>
<dbReference type="OrthoDB" id="676764at2759"/>
<dbReference type="Proteomes" id="UP000007015">
    <property type="component" value="Chromosome 9"/>
</dbReference>
<dbReference type="GO" id="GO:0005634">
    <property type="term" value="C:nucleus"/>
    <property type="evidence" value="ECO:0007669"/>
    <property type="project" value="UniProtKB-SubCell"/>
</dbReference>
<dbReference type="GO" id="GO:0003677">
    <property type="term" value="F:DNA binding"/>
    <property type="evidence" value="ECO:0007669"/>
    <property type="project" value="UniProtKB-KW"/>
</dbReference>
<dbReference type="GO" id="GO:0003700">
    <property type="term" value="F:DNA-binding transcription factor activity"/>
    <property type="evidence" value="ECO:0007669"/>
    <property type="project" value="InterPro"/>
</dbReference>
<dbReference type="Gene3D" id="3.30.730.10">
    <property type="entry name" value="AP2/ERF domain"/>
    <property type="match status" value="1"/>
</dbReference>
<dbReference type="InterPro" id="IPR001471">
    <property type="entry name" value="AP2/ERF_dom"/>
</dbReference>
<dbReference type="InterPro" id="IPR036955">
    <property type="entry name" value="AP2/ERF_dom_sf"/>
</dbReference>
<dbReference type="InterPro" id="IPR016177">
    <property type="entry name" value="DNA-bd_dom_sf"/>
</dbReference>
<dbReference type="InterPro" id="IPR045277">
    <property type="entry name" value="DRE1A-I"/>
</dbReference>
<dbReference type="PANTHER" id="PTHR31839:SF57">
    <property type="entry name" value="DEHYDRATION-RESPONSIVE ELEMENT-BINDING PROTEIN 1B"/>
    <property type="match status" value="1"/>
</dbReference>
<dbReference type="PANTHER" id="PTHR31839">
    <property type="entry name" value="DEHYDRATION-RESPONSIVE ELEMENT-BINDING PROTEIN 1D"/>
    <property type="match status" value="1"/>
</dbReference>
<dbReference type="Pfam" id="PF00847">
    <property type="entry name" value="AP2"/>
    <property type="match status" value="1"/>
</dbReference>
<dbReference type="PRINTS" id="PR00367">
    <property type="entry name" value="ETHRSPELEMNT"/>
</dbReference>
<dbReference type="SMART" id="SM00380">
    <property type="entry name" value="AP2"/>
    <property type="match status" value="1"/>
</dbReference>
<dbReference type="SUPFAM" id="SSF54171">
    <property type="entry name" value="DNA-binding domain"/>
    <property type="match status" value="1"/>
</dbReference>
<dbReference type="PROSITE" id="PS51032">
    <property type="entry name" value="AP2_ERF"/>
    <property type="match status" value="1"/>
</dbReference>
<gene>
    <name type="primary">DREB1B</name>
    <name type="synonym">ERF31</name>
    <name type="ORF">OsI_031030</name>
</gene>
<feature type="chain" id="PRO_0000323031" description="Dehydration-responsive element-binding protein 1B">
    <location>
        <begin position="1"/>
        <end position="218"/>
    </location>
</feature>
<feature type="DNA-binding region" description="AP2/ERF" evidence="2">
    <location>
        <begin position="32"/>
        <end position="95"/>
    </location>
</feature>
<feature type="region of interest" description="Disordered" evidence="3">
    <location>
        <begin position="1"/>
        <end position="26"/>
    </location>
</feature>
<feature type="region of interest" description="Disordered" evidence="3">
    <location>
        <begin position="131"/>
        <end position="151"/>
    </location>
</feature>
<feature type="compositionally biased region" description="Acidic residues" evidence="3">
    <location>
        <begin position="141"/>
        <end position="151"/>
    </location>
</feature>
<proteinExistence type="evidence at transcript level"/>
<sequence length="218" mass="23239">MEVEEAAYRTVWSEPPKRPAGRTKFRETRHPVYRGVRRRGGRPGAAGRWVCEVRVPGARGSRLWLGTFATAEAAARAHDAAALALRGRAACLNFADSAWRMPPVPASAALAGARGVRDAVAVAVEAFQRQSAAPSSPAETFADDGDEEEDNKDVLPVAAAEVFDAGAFELDDGFRFGGMDAGSYYASLAQGLLVEPPAAGAWWEDGELAGSDMPLWSY</sequence>
<protein>
    <recommendedName>
        <fullName>Dehydration-responsive element-binding protein 1B</fullName>
        <shortName>Protein DREB1B</shortName>
    </recommendedName>
</protein>
<reference key="1">
    <citation type="submission" date="2002-10" db="EMBL/GenBank/DDBJ databases">
        <title>Isolation and characterization of mRNA of a DRE-binding protein 1B (DREB 1B) of indica rice.</title>
        <authorList>
            <person name="Ravindra Babu P."/>
            <person name="Markandeya G."/>
            <person name="Ramakrishna W."/>
            <person name="Nagabhushana I."/>
            <person name="Chandra Sekhar A."/>
            <person name="Madana Mohan Reddy A."/>
            <person name="Bennetzen J.L."/>
            <person name="Reddy A.R."/>
        </authorList>
    </citation>
    <scope>NUCLEOTIDE SEQUENCE [MRNA]</scope>
    <source>
        <strain>cv. Nagina 22</strain>
    </source>
</reference>
<reference key="2">
    <citation type="journal article" date="2005" name="PLoS Biol.">
        <title>The genomes of Oryza sativa: a history of duplications.</title>
        <authorList>
            <person name="Yu J."/>
            <person name="Wang J."/>
            <person name="Lin W."/>
            <person name="Li S."/>
            <person name="Li H."/>
            <person name="Zhou J."/>
            <person name="Ni P."/>
            <person name="Dong W."/>
            <person name="Hu S."/>
            <person name="Zeng C."/>
            <person name="Zhang J."/>
            <person name="Zhang Y."/>
            <person name="Li R."/>
            <person name="Xu Z."/>
            <person name="Li S."/>
            <person name="Li X."/>
            <person name="Zheng H."/>
            <person name="Cong L."/>
            <person name="Lin L."/>
            <person name="Yin J."/>
            <person name="Geng J."/>
            <person name="Li G."/>
            <person name="Shi J."/>
            <person name="Liu J."/>
            <person name="Lv H."/>
            <person name="Li J."/>
            <person name="Wang J."/>
            <person name="Deng Y."/>
            <person name="Ran L."/>
            <person name="Shi X."/>
            <person name="Wang X."/>
            <person name="Wu Q."/>
            <person name="Li C."/>
            <person name="Ren X."/>
            <person name="Wang J."/>
            <person name="Wang X."/>
            <person name="Li D."/>
            <person name="Liu D."/>
            <person name="Zhang X."/>
            <person name="Ji Z."/>
            <person name="Zhao W."/>
            <person name="Sun Y."/>
            <person name="Zhang Z."/>
            <person name="Bao J."/>
            <person name="Han Y."/>
            <person name="Dong L."/>
            <person name="Ji J."/>
            <person name="Chen P."/>
            <person name="Wu S."/>
            <person name="Liu J."/>
            <person name="Xiao Y."/>
            <person name="Bu D."/>
            <person name="Tan J."/>
            <person name="Yang L."/>
            <person name="Ye C."/>
            <person name="Zhang J."/>
            <person name="Xu J."/>
            <person name="Zhou Y."/>
            <person name="Yu Y."/>
            <person name="Zhang B."/>
            <person name="Zhuang S."/>
            <person name="Wei H."/>
            <person name="Liu B."/>
            <person name="Lei M."/>
            <person name="Yu H."/>
            <person name="Li Y."/>
            <person name="Xu H."/>
            <person name="Wei S."/>
            <person name="He X."/>
            <person name="Fang L."/>
            <person name="Zhang Z."/>
            <person name="Zhang Y."/>
            <person name="Huang X."/>
            <person name="Su Z."/>
            <person name="Tong W."/>
            <person name="Li J."/>
            <person name="Tong Z."/>
            <person name="Li S."/>
            <person name="Ye J."/>
            <person name="Wang L."/>
            <person name="Fang L."/>
            <person name="Lei T."/>
            <person name="Chen C.-S."/>
            <person name="Chen H.-C."/>
            <person name="Xu Z."/>
            <person name="Li H."/>
            <person name="Huang H."/>
            <person name="Zhang F."/>
            <person name="Xu H."/>
            <person name="Li N."/>
            <person name="Zhao C."/>
            <person name="Li S."/>
            <person name="Dong L."/>
            <person name="Huang Y."/>
            <person name="Li L."/>
            <person name="Xi Y."/>
            <person name="Qi Q."/>
            <person name="Li W."/>
            <person name="Zhang B."/>
            <person name="Hu W."/>
            <person name="Zhang Y."/>
            <person name="Tian X."/>
            <person name="Jiao Y."/>
            <person name="Liang X."/>
            <person name="Jin J."/>
            <person name="Gao L."/>
            <person name="Zheng W."/>
            <person name="Hao B."/>
            <person name="Liu S.-M."/>
            <person name="Wang W."/>
            <person name="Yuan L."/>
            <person name="Cao M."/>
            <person name="McDermott J."/>
            <person name="Samudrala R."/>
            <person name="Wang J."/>
            <person name="Wong G.K.-S."/>
            <person name="Yang H."/>
        </authorList>
    </citation>
    <scope>NUCLEOTIDE SEQUENCE [LARGE SCALE GENOMIC DNA]</scope>
    <source>
        <strain>cv. 93-11</strain>
    </source>
</reference>
<organism>
    <name type="scientific">Oryza sativa subsp. indica</name>
    <name type="common">Rice</name>
    <dbReference type="NCBI Taxonomy" id="39946"/>
    <lineage>
        <taxon>Eukaryota</taxon>
        <taxon>Viridiplantae</taxon>
        <taxon>Streptophyta</taxon>
        <taxon>Embryophyta</taxon>
        <taxon>Tracheophyta</taxon>
        <taxon>Spermatophyta</taxon>
        <taxon>Magnoliopsida</taxon>
        <taxon>Liliopsida</taxon>
        <taxon>Poales</taxon>
        <taxon>Poaceae</taxon>
        <taxon>BOP clade</taxon>
        <taxon>Oryzoideae</taxon>
        <taxon>Oryzeae</taxon>
        <taxon>Oryzinae</taxon>
        <taxon>Oryza</taxon>
        <taxon>Oryza sativa</taxon>
    </lineage>
</organism>
<evidence type="ECO:0000250" key="1"/>
<evidence type="ECO:0000255" key="2">
    <source>
        <dbReference type="PROSITE-ProRule" id="PRU00366"/>
    </source>
</evidence>
<evidence type="ECO:0000256" key="3">
    <source>
        <dbReference type="SAM" id="MobiDB-lite"/>
    </source>
</evidence>
<evidence type="ECO:0000305" key="4"/>
<comment type="function">
    <text evidence="1">Transcriptional activator that binds specifically to the DNA sequence 5'-[AG]CCGAC-3'. Binding to the C-repeat/DRE element mediates high salinity- and dehydration-inducible transcription. Confers resistance to high salt, cold and drought stress (By similarity).</text>
</comment>
<comment type="subcellular location">
    <subcellularLocation>
        <location evidence="4">Nucleus</location>
    </subcellularLocation>
</comment>
<comment type="similarity">
    <text evidence="4">Belongs to the AP2/ERF transcription factor family. ERF subfamily.</text>
</comment>
<name>DRE1B_ORYSI</name>
<accession>Q8GUW4</accession>